<keyword id="KW-0067">ATP-binding</keyword>
<keyword id="KW-0315">Glutamine amidotransferase</keyword>
<keyword id="KW-0436">Ligase</keyword>
<keyword id="KW-0460">Magnesium</keyword>
<keyword id="KW-0479">Metal-binding</keyword>
<keyword id="KW-0547">Nucleotide-binding</keyword>
<keyword id="KW-0665">Pyrimidine biosynthesis</keyword>
<comment type="function">
    <text evidence="1">Catalyzes the ATP-dependent amination of UTP to CTP with either L-glutamine or ammonia as the source of nitrogen. Regulates intracellular CTP levels through interactions with the four ribonucleotide triphosphates.</text>
</comment>
<comment type="catalytic activity">
    <reaction evidence="1">
        <text>UTP + L-glutamine + ATP + H2O = CTP + L-glutamate + ADP + phosphate + 2 H(+)</text>
        <dbReference type="Rhea" id="RHEA:26426"/>
        <dbReference type="ChEBI" id="CHEBI:15377"/>
        <dbReference type="ChEBI" id="CHEBI:15378"/>
        <dbReference type="ChEBI" id="CHEBI:29985"/>
        <dbReference type="ChEBI" id="CHEBI:30616"/>
        <dbReference type="ChEBI" id="CHEBI:37563"/>
        <dbReference type="ChEBI" id="CHEBI:43474"/>
        <dbReference type="ChEBI" id="CHEBI:46398"/>
        <dbReference type="ChEBI" id="CHEBI:58359"/>
        <dbReference type="ChEBI" id="CHEBI:456216"/>
        <dbReference type="EC" id="6.3.4.2"/>
    </reaction>
</comment>
<comment type="catalytic activity">
    <reaction evidence="1">
        <text>L-glutamine + H2O = L-glutamate + NH4(+)</text>
        <dbReference type="Rhea" id="RHEA:15889"/>
        <dbReference type="ChEBI" id="CHEBI:15377"/>
        <dbReference type="ChEBI" id="CHEBI:28938"/>
        <dbReference type="ChEBI" id="CHEBI:29985"/>
        <dbReference type="ChEBI" id="CHEBI:58359"/>
    </reaction>
</comment>
<comment type="catalytic activity">
    <reaction evidence="1">
        <text>UTP + NH4(+) + ATP = CTP + ADP + phosphate + 2 H(+)</text>
        <dbReference type="Rhea" id="RHEA:16597"/>
        <dbReference type="ChEBI" id="CHEBI:15378"/>
        <dbReference type="ChEBI" id="CHEBI:28938"/>
        <dbReference type="ChEBI" id="CHEBI:30616"/>
        <dbReference type="ChEBI" id="CHEBI:37563"/>
        <dbReference type="ChEBI" id="CHEBI:43474"/>
        <dbReference type="ChEBI" id="CHEBI:46398"/>
        <dbReference type="ChEBI" id="CHEBI:456216"/>
    </reaction>
</comment>
<comment type="activity regulation">
    <text evidence="1">Allosterically activated by GTP, when glutamine is the substrate; GTP has no effect on the reaction when ammonia is the substrate. The allosteric effector GTP functions by stabilizing the protein conformation that binds the tetrahedral intermediate(s) formed during glutamine hydrolysis. Inhibited by the product CTP, via allosteric rather than competitive inhibition.</text>
</comment>
<comment type="pathway">
    <text evidence="1">Pyrimidine metabolism; CTP biosynthesis via de novo pathway; CTP from UDP: step 2/2.</text>
</comment>
<comment type="subunit">
    <text evidence="1">Homotetramer.</text>
</comment>
<comment type="miscellaneous">
    <text evidence="1">CTPSs have evolved a hybrid strategy for distinguishing between UTP and CTP. The overlapping regions of the product feedback inhibitory and substrate sites recognize a common feature in both compounds, the triphosphate moiety. To differentiate isosteric substrate and product pyrimidine rings, an additional pocket far from the expected kinase/ligase catalytic site, specifically recognizes the cytosine and ribose portions of the product inhibitor.</text>
</comment>
<comment type="similarity">
    <text evidence="1">Belongs to the CTP synthase family.</text>
</comment>
<name>PYRG_CHLT2</name>
<dbReference type="EC" id="6.3.4.2" evidence="1"/>
<dbReference type="EMBL" id="AM884176">
    <property type="protein sequence ID" value="CAP03874.1"/>
    <property type="molecule type" value="Genomic_DNA"/>
</dbReference>
<dbReference type="RefSeq" id="WP_009873622.1">
    <property type="nucleotide sequence ID" value="NC_010287.1"/>
</dbReference>
<dbReference type="RefSeq" id="YP_001654511.1">
    <property type="nucleotide sequence ID" value="NC_010287.1"/>
</dbReference>
<dbReference type="SMR" id="B0B9T3"/>
<dbReference type="MEROPS" id="C26.964"/>
<dbReference type="KEGG" id="ctb:CTL0435"/>
<dbReference type="PATRIC" id="fig|471472.4.peg.470"/>
<dbReference type="HOGENOM" id="CLU_011675_5_0_0"/>
<dbReference type="UniPathway" id="UPA00159">
    <property type="reaction ID" value="UER00277"/>
</dbReference>
<dbReference type="Proteomes" id="UP001154402">
    <property type="component" value="Chromosome"/>
</dbReference>
<dbReference type="GO" id="GO:0005829">
    <property type="term" value="C:cytosol"/>
    <property type="evidence" value="ECO:0007669"/>
    <property type="project" value="TreeGrafter"/>
</dbReference>
<dbReference type="GO" id="GO:0005524">
    <property type="term" value="F:ATP binding"/>
    <property type="evidence" value="ECO:0007669"/>
    <property type="project" value="UniProtKB-KW"/>
</dbReference>
<dbReference type="GO" id="GO:0003883">
    <property type="term" value="F:CTP synthase activity"/>
    <property type="evidence" value="ECO:0007669"/>
    <property type="project" value="UniProtKB-UniRule"/>
</dbReference>
<dbReference type="GO" id="GO:0004359">
    <property type="term" value="F:glutaminase activity"/>
    <property type="evidence" value="ECO:0007669"/>
    <property type="project" value="RHEA"/>
</dbReference>
<dbReference type="GO" id="GO:0042802">
    <property type="term" value="F:identical protein binding"/>
    <property type="evidence" value="ECO:0007669"/>
    <property type="project" value="TreeGrafter"/>
</dbReference>
<dbReference type="GO" id="GO:0046872">
    <property type="term" value="F:metal ion binding"/>
    <property type="evidence" value="ECO:0007669"/>
    <property type="project" value="UniProtKB-KW"/>
</dbReference>
<dbReference type="GO" id="GO:0044210">
    <property type="term" value="P:'de novo' CTP biosynthetic process"/>
    <property type="evidence" value="ECO:0007669"/>
    <property type="project" value="UniProtKB-UniRule"/>
</dbReference>
<dbReference type="GO" id="GO:0019856">
    <property type="term" value="P:pyrimidine nucleobase biosynthetic process"/>
    <property type="evidence" value="ECO:0007669"/>
    <property type="project" value="TreeGrafter"/>
</dbReference>
<dbReference type="CDD" id="cd03113">
    <property type="entry name" value="CTPS_N"/>
    <property type="match status" value="1"/>
</dbReference>
<dbReference type="CDD" id="cd01746">
    <property type="entry name" value="GATase1_CTP_Synthase"/>
    <property type="match status" value="1"/>
</dbReference>
<dbReference type="FunFam" id="3.40.50.300:FF:000009">
    <property type="entry name" value="CTP synthase"/>
    <property type="match status" value="1"/>
</dbReference>
<dbReference type="FunFam" id="3.40.50.880:FF:000002">
    <property type="entry name" value="CTP synthase"/>
    <property type="match status" value="1"/>
</dbReference>
<dbReference type="Gene3D" id="3.40.50.880">
    <property type="match status" value="1"/>
</dbReference>
<dbReference type="Gene3D" id="3.40.50.300">
    <property type="entry name" value="P-loop containing nucleotide triphosphate hydrolases"/>
    <property type="match status" value="1"/>
</dbReference>
<dbReference type="HAMAP" id="MF_01227">
    <property type="entry name" value="PyrG"/>
    <property type="match status" value="1"/>
</dbReference>
<dbReference type="InterPro" id="IPR029062">
    <property type="entry name" value="Class_I_gatase-like"/>
</dbReference>
<dbReference type="InterPro" id="IPR004468">
    <property type="entry name" value="CTP_synthase"/>
</dbReference>
<dbReference type="InterPro" id="IPR017456">
    <property type="entry name" value="CTP_synthase_N"/>
</dbReference>
<dbReference type="InterPro" id="IPR017926">
    <property type="entry name" value="GATASE"/>
</dbReference>
<dbReference type="InterPro" id="IPR033828">
    <property type="entry name" value="GATase1_CTP_Synthase"/>
</dbReference>
<dbReference type="InterPro" id="IPR027417">
    <property type="entry name" value="P-loop_NTPase"/>
</dbReference>
<dbReference type="NCBIfam" id="NF003792">
    <property type="entry name" value="PRK05380.1"/>
    <property type="match status" value="1"/>
</dbReference>
<dbReference type="NCBIfam" id="TIGR00337">
    <property type="entry name" value="PyrG"/>
    <property type="match status" value="1"/>
</dbReference>
<dbReference type="PANTHER" id="PTHR11550">
    <property type="entry name" value="CTP SYNTHASE"/>
    <property type="match status" value="1"/>
</dbReference>
<dbReference type="PANTHER" id="PTHR11550:SF0">
    <property type="entry name" value="CTP SYNTHASE-RELATED"/>
    <property type="match status" value="1"/>
</dbReference>
<dbReference type="Pfam" id="PF06418">
    <property type="entry name" value="CTP_synth_N"/>
    <property type="match status" value="1"/>
</dbReference>
<dbReference type="Pfam" id="PF00117">
    <property type="entry name" value="GATase"/>
    <property type="match status" value="1"/>
</dbReference>
<dbReference type="SUPFAM" id="SSF52317">
    <property type="entry name" value="Class I glutamine amidotransferase-like"/>
    <property type="match status" value="1"/>
</dbReference>
<dbReference type="SUPFAM" id="SSF52540">
    <property type="entry name" value="P-loop containing nucleoside triphosphate hydrolases"/>
    <property type="match status" value="1"/>
</dbReference>
<dbReference type="PROSITE" id="PS51273">
    <property type="entry name" value="GATASE_TYPE_1"/>
    <property type="match status" value="1"/>
</dbReference>
<organism>
    <name type="scientific">Chlamydia trachomatis serovar L2 (strain ATCC VR-902B / DSM 19102 / 434/Bu)</name>
    <dbReference type="NCBI Taxonomy" id="471472"/>
    <lineage>
        <taxon>Bacteria</taxon>
        <taxon>Pseudomonadati</taxon>
        <taxon>Chlamydiota</taxon>
        <taxon>Chlamydiia</taxon>
        <taxon>Chlamydiales</taxon>
        <taxon>Chlamydiaceae</taxon>
        <taxon>Chlamydia/Chlamydophila group</taxon>
        <taxon>Chlamydia</taxon>
    </lineage>
</organism>
<feature type="chain" id="PRO_1000139418" description="CTP synthase">
    <location>
        <begin position="1"/>
        <end position="539"/>
    </location>
</feature>
<feature type="domain" description="Glutamine amidotransferase type-1" evidence="1">
    <location>
        <begin position="294"/>
        <end position="532"/>
    </location>
</feature>
<feature type="region of interest" description="Amidoligase domain" evidence="1">
    <location>
        <begin position="1"/>
        <end position="268"/>
    </location>
</feature>
<feature type="active site" description="Nucleophile; for glutamine hydrolysis" evidence="1">
    <location>
        <position position="380"/>
    </location>
</feature>
<feature type="active site" evidence="1">
    <location>
        <position position="505"/>
    </location>
</feature>
<feature type="active site" evidence="1">
    <location>
        <position position="507"/>
    </location>
</feature>
<feature type="binding site" evidence="1">
    <location>
        <position position="14"/>
    </location>
    <ligand>
        <name>CTP</name>
        <dbReference type="ChEBI" id="CHEBI:37563"/>
        <note>allosteric inhibitor</note>
    </ligand>
</feature>
<feature type="binding site" evidence="1">
    <location>
        <position position="14"/>
    </location>
    <ligand>
        <name>UTP</name>
        <dbReference type="ChEBI" id="CHEBI:46398"/>
    </ligand>
</feature>
<feature type="binding site" evidence="1">
    <location>
        <begin position="15"/>
        <end position="20"/>
    </location>
    <ligand>
        <name>ATP</name>
        <dbReference type="ChEBI" id="CHEBI:30616"/>
    </ligand>
</feature>
<feature type="binding site" evidence="1">
    <location>
        <position position="55"/>
    </location>
    <ligand>
        <name>L-glutamine</name>
        <dbReference type="ChEBI" id="CHEBI:58359"/>
    </ligand>
</feature>
<feature type="binding site" evidence="1">
    <location>
        <position position="72"/>
    </location>
    <ligand>
        <name>ATP</name>
        <dbReference type="ChEBI" id="CHEBI:30616"/>
    </ligand>
</feature>
<feature type="binding site" evidence="1">
    <location>
        <position position="72"/>
    </location>
    <ligand>
        <name>Mg(2+)</name>
        <dbReference type="ChEBI" id="CHEBI:18420"/>
    </ligand>
</feature>
<feature type="binding site" evidence="1">
    <location>
        <position position="142"/>
    </location>
    <ligand>
        <name>Mg(2+)</name>
        <dbReference type="ChEBI" id="CHEBI:18420"/>
    </ligand>
</feature>
<feature type="binding site" evidence="1">
    <location>
        <begin position="149"/>
        <end position="151"/>
    </location>
    <ligand>
        <name>CTP</name>
        <dbReference type="ChEBI" id="CHEBI:37563"/>
        <note>allosteric inhibitor</note>
    </ligand>
</feature>
<feature type="binding site" evidence="1">
    <location>
        <begin position="188"/>
        <end position="193"/>
    </location>
    <ligand>
        <name>CTP</name>
        <dbReference type="ChEBI" id="CHEBI:37563"/>
        <note>allosteric inhibitor</note>
    </ligand>
</feature>
<feature type="binding site" evidence="1">
    <location>
        <begin position="188"/>
        <end position="193"/>
    </location>
    <ligand>
        <name>UTP</name>
        <dbReference type="ChEBI" id="CHEBI:46398"/>
    </ligand>
</feature>
<feature type="binding site" evidence="1">
    <location>
        <position position="224"/>
    </location>
    <ligand>
        <name>CTP</name>
        <dbReference type="ChEBI" id="CHEBI:37563"/>
        <note>allosteric inhibitor</note>
    </ligand>
</feature>
<feature type="binding site" evidence="1">
    <location>
        <position position="224"/>
    </location>
    <ligand>
        <name>UTP</name>
        <dbReference type="ChEBI" id="CHEBI:46398"/>
    </ligand>
</feature>
<feature type="binding site" evidence="1">
    <location>
        <position position="353"/>
    </location>
    <ligand>
        <name>L-glutamine</name>
        <dbReference type="ChEBI" id="CHEBI:58359"/>
    </ligand>
</feature>
<feature type="binding site" evidence="1">
    <location>
        <begin position="381"/>
        <end position="384"/>
    </location>
    <ligand>
        <name>L-glutamine</name>
        <dbReference type="ChEBI" id="CHEBI:58359"/>
    </ligand>
</feature>
<feature type="binding site" evidence="1">
    <location>
        <position position="404"/>
    </location>
    <ligand>
        <name>L-glutamine</name>
        <dbReference type="ChEBI" id="CHEBI:58359"/>
    </ligand>
</feature>
<feature type="binding site" evidence="1">
    <location>
        <position position="460"/>
    </location>
    <ligand>
        <name>L-glutamine</name>
        <dbReference type="ChEBI" id="CHEBI:58359"/>
    </ligand>
</feature>
<accession>B0B9T3</accession>
<proteinExistence type="inferred from homology"/>
<evidence type="ECO:0000255" key="1">
    <source>
        <dbReference type="HAMAP-Rule" id="MF_01227"/>
    </source>
</evidence>
<protein>
    <recommendedName>
        <fullName evidence="1">CTP synthase</fullName>
        <ecNumber evidence="1">6.3.4.2</ecNumber>
    </recommendedName>
    <alternativeName>
        <fullName evidence="1">Cytidine 5'-triphosphate synthase</fullName>
    </alternativeName>
    <alternativeName>
        <fullName evidence="1">Cytidine triphosphate synthetase</fullName>
        <shortName evidence="1">CTP synthetase</shortName>
        <shortName evidence="1">CTPS</shortName>
    </alternativeName>
    <alternativeName>
        <fullName evidence="1">UTP--ammonia ligase</fullName>
    </alternativeName>
</protein>
<gene>
    <name evidence="1" type="primary">pyrG</name>
    <name type="ordered locus">CTL0435</name>
</gene>
<sequence>MSFKSIFLTGGVVSSLGKGLTAASLALLLERQDLKVAMLKLDPYLNVDPGTMNPYEHGEVYVTDDGVETDLDLGHYHRFSSVQLSKYSIATSGQIYTKVLTKERNGEFLGSTVQVIPHVTNEIINVIQSCADHHKPDILIVEIGGTIGDIESLPFLEAVRQFRCEHPQDCLSIHMTYVPYLRAAKEIKTKPTQHSVQNLRSIGISPDVILCRSEAPLSTEVKRKISLFCNVPEHAVFNAIDLERSIYEMPLLLAKENISDFLLNKLGFSPKPLDLSDWQDLVEALCDKERQHVRIGLVGKYLEHKDAYKSVFEALFHASVPANCSLELVPIAPESEDLLEQLSQCDGCLIPGGFGTRSWEGKISAARYCREQNIPCFGICLGMQALVVEYARNVLDKPLANSMEMNPETPDPVVCMMEGQDSVVKGGTMRLGAYPCRIAPGSLASAAYKTDLVQERHRHRYEVNPSYIERLEEHGLKIAGVCPLGELCEIVEIPNHRWMLGVQFHPEFLSKLAKPHPLFIEFIRAAKAYSLEKANHEHR</sequence>
<reference key="1">
    <citation type="journal article" date="2008" name="Genome Res.">
        <title>Chlamydia trachomatis: genome sequence analysis of lymphogranuloma venereum isolates.</title>
        <authorList>
            <person name="Thomson N.R."/>
            <person name="Holden M.T.G."/>
            <person name="Carder C."/>
            <person name="Lennard N."/>
            <person name="Lockey S.J."/>
            <person name="Marsh P."/>
            <person name="Skipp P."/>
            <person name="O'Connor C.D."/>
            <person name="Goodhead I."/>
            <person name="Norbertzcak H."/>
            <person name="Harris B."/>
            <person name="Ormond D."/>
            <person name="Rance R."/>
            <person name="Quail M.A."/>
            <person name="Parkhill J."/>
            <person name="Stephens R.S."/>
            <person name="Clarke I.N."/>
        </authorList>
    </citation>
    <scope>NUCLEOTIDE SEQUENCE [LARGE SCALE GENOMIC DNA]</scope>
    <source>
        <strain>ATCC VR-902B / DSM 19102 / 434/Bu</strain>
    </source>
</reference>